<name>CITD_SHIFL</name>
<reference key="1">
    <citation type="journal article" date="2002" name="Nucleic Acids Res.">
        <title>Genome sequence of Shigella flexneri 2a: insights into pathogenicity through comparison with genomes of Escherichia coli K12 and O157.</title>
        <authorList>
            <person name="Jin Q."/>
            <person name="Yuan Z."/>
            <person name="Xu J."/>
            <person name="Wang Y."/>
            <person name="Shen Y."/>
            <person name="Lu W."/>
            <person name="Wang J."/>
            <person name="Liu H."/>
            <person name="Yang J."/>
            <person name="Yang F."/>
            <person name="Zhang X."/>
            <person name="Zhang J."/>
            <person name="Yang G."/>
            <person name="Wu H."/>
            <person name="Qu D."/>
            <person name="Dong J."/>
            <person name="Sun L."/>
            <person name="Xue Y."/>
            <person name="Zhao A."/>
            <person name="Gao Y."/>
            <person name="Zhu J."/>
            <person name="Kan B."/>
            <person name="Ding K."/>
            <person name="Chen S."/>
            <person name="Cheng H."/>
            <person name="Yao Z."/>
            <person name="He B."/>
            <person name="Chen R."/>
            <person name="Ma D."/>
            <person name="Qiang B."/>
            <person name="Wen Y."/>
            <person name="Hou Y."/>
            <person name="Yu J."/>
        </authorList>
    </citation>
    <scope>NUCLEOTIDE SEQUENCE [LARGE SCALE GENOMIC DNA]</scope>
    <source>
        <strain>301 / Serotype 2a</strain>
    </source>
</reference>
<reference key="2">
    <citation type="journal article" date="2003" name="Infect. Immun.">
        <title>Complete genome sequence and comparative genomics of Shigella flexneri serotype 2a strain 2457T.</title>
        <authorList>
            <person name="Wei J."/>
            <person name="Goldberg M.B."/>
            <person name="Burland V."/>
            <person name="Venkatesan M.M."/>
            <person name="Deng W."/>
            <person name="Fournier G."/>
            <person name="Mayhew G.F."/>
            <person name="Plunkett G. III"/>
            <person name="Rose D.J."/>
            <person name="Darling A."/>
            <person name="Mau B."/>
            <person name="Perna N.T."/>
            <person name="Payne S.M."/>
            <person name="Runyen-Janecky L.J."/>
            <person name="Zhou S."/>
            <person name="Schwartz D.C."/>
            <person name="Blattner F.R."/>
        </authorList>
    </citation>
    <scope>NUCLEOTIDE SEQUENCE [LARGE SCALE GENOMIC DNA]</scope>
    <source>
        <strain>ATCC 700930 / 2457T / Serotype 2a</strain>
    </source>
</reference>
<gene>
    <name evidence="1" type="primary">citD</name>
    <name type="ordered locus">SF0534</name>
    <name type="ordered locus">S0541</name>
</gene>
<organism>
    <name type="scientific">Shigella flexneri</name>
    <dbReference type="NCBI Taxonomy" id="623"/>
    <lineage>
        <taxon>Bacteria</taxon>
        <taxon>Pseudomonadati</taxon>
        <taxon>Pseudomonadota</taxon>
        <taxon>Gammaproteobacteria</taxon>
        <taxon>Enterobacterales</taxon>
        <taxon>Enterobacteriaceae</taxon>
        <taxon>Shigella</taxon>
    </lineage>
</organism>
<proteinExistence type="inferred from homology"/>
<dbReference type="EMBL" id="AE005674">
    <property type="protein sequence ID" value="AAN42178.2"/>
    <property type="molecule type" value="Genomic_DNA"/>
</dbReference>
<dbReference type="EMBL" id="AE014073">
    <property type="protein sequence ID" value="AAP16051.1"/>
    <property type="molecule type" value="Genomic_DNA"/>
</dbReference>
<dbReference type="RefSeq" id="NP_706471.2">
    <property type="nucleotide sequence ID" value="NC_004337.2"/>
</dbReference>
<dbReference type="RefSeq" id="WP_000700701.1">
    <property type="nucleotide sequence ID" value="NZ_WPGW01000089.1"/>
</dbReference>
<dbReference type="SMR" id="Q821B6"/>
<dbReference type="STRING" id="198214.SF0534"/>
<dbReference type="PaxDb" id="198214-SF0534"/>
<dbReference type="GeneID" id="1023433"/>
<dbReference type="KEGG" id="sfl:SF0534"/>
<dbReference type="KEGG" id="sfx:S0541"/>
<dbReference type="PATRIC" id="fig|198214.7.peg.622"/>
<dbReference type="HOGENOM" id="CLU_158489_0_0_6"/>
<dbReference type="Proteomes" id="UP000001006">
    <property type="component" value="Chromosome"/>
</dbReference>
<dbReference type="Proteomes" id="UP000002673">
    <property type="component" value="Chromosome"/>
</dbReference>
<dbReference type="GO" id="GO:0005737">
    <property type="term" value="C:cytoplasm"/>
    <property type="evidence" value="ECO:0007669"/>
    <property type="project" value="UniProtKB-SubCell"/>
</dbReference>
<dbReference type="HAMAP" id="MF_00805">
    <property type="entry name" value="CitD"/>
    <property type="match status" value="1"/>
</dbReference>
<dbReference type="InterPro" id="IPR006495">
    <property type="entry name" value="CitD"/>
</dbReference>
<dbReference type="InterPro" id="IPR023439">
    <property type="entry name" value="Mal_deCO2ase/Cit_lyase_ACP"/>
</dbReference>
<dbReference type="NCBIfam" id="TIGR01608">
    <property type="entry name" value="citD"/>
    <property type="match status" value="1"/>
</dbReference>
<dbReference type="NCBIfam" id="NF009726">
    <property type="entry name" value="PRK13253.1"/>
    <property type="match status" value="1"/>
</dbReference>
<dbReference type="Pfam" id="PF06857">
    <property type="entry name" value="ACP"/>
    <property type="match status" value="1"/>
</dbReference>
<dbReference type="PIRSF" id="PIRSF002736">
    <property type="entry name" value="Citrt_lyas_gamma"/>
    <property type="match status" value="1"/>
</dbReference>
<sequence>MKINQPAVAGTLESGDVMIRIAPLDTQDIDLQINSSVEKQFGDAIRTTILDVLARYNVRGVQLNVDDKGALDCILHARLEALLARASGIPALPWEDCQ</sequence>
<keyword id="KW-0963">Cytoplasm</keyword>
<keyword id="KW-0597">Phosphoprotein</keyword>
<keyword id="KW-1185">Reference proteome</keyword>
<feature type="chain" id="PRO_0000214711" description="Citrate lyase acyl carrier protein">
    <location>
        <begin position="1"/>
        <end position="98"/>
    </location>
</feature>
<feature type="modified residue" description="O-(phosphoribosyl dephospho-coenzyme A)serine" evidence="1">
    <location>
        <position position="14"/>
    </location>
</feature>
<comment type="function">
    <text evidence="1">Covalent carrier of the coenzyme of citrate lyase.</text>
</comment>
<comment type="subunit">
    <text evidence="1">Oligomer with a subunit composition of (alpha,beta,gamma)6.</text>
</comment>
<comment type="subcellular location">
    <subcellularLocation>
        <location evidence="1">Cytoplasm</location>
    </subcellularLocation>
</comment>
<comment type="similarity">
    <text evidence="1">Belongs to the CitD family.</text>
</comment>
<protein>
    <recommendedName>
        <fullName evidence="1">Citrate lyase acyl carrier protein</fullName>
    </recommendedName>
    <alternativeName>
        <fullName evidence="1">Citrate lyase gamma chain</fullName>
    </alternativeName>
</protein>
<accession>Q821B6</accession>
<accession>Q7UDF3</accession>
<evidence type="ECO:0000255" key="1">
    <source>
        <dbReference type="HAMAP-Rule" id="MF_00805"/>
    </source>
</evidence>